<protein>
    <recommendedName>
        <fullName evidence="1">ATP synthase gamma chain</fullName>
    </recommendedName>
    <alternativeName>
        <fullName evidence="1">ATP synthase F1 sector gamma subunit</fullName>
    </alternativeName>
    <alternativeName>
        <fullName evidence="1">F-ATPase gamma subunit</fullName>
    </alternativeName>
</protein>
<evidence type="ECO:0000255" key="1">
    <source>
        <dbReference type="HAMAP-Rule" id="MF_00815"/>
    </source>
</evidence>
<comment type="function">
    <text evidence="1">Produces ATP from ADP in the presence of a proton gradient across the membrane. The gamma chain is believed to be important in regulating ATPase activity and the flow of protons through the CF(0) complex.</text>
</comment>
<comment type="subunit">
    <text evidence="1">F-type ATPases have 2 components, CF(1) - the catalytic core - and CF(0) - the membrane proton channel. CF(1) has five subunits: alpha(3), beta(3), gamma(1), delta(1), epsilon(1). CF(0) has three main subunits: a, b and c.</text>
</comment>
<comment type="subcellular location">
    <subcellularLocation>
        <location evidence="1">Cell membrane</location>
        <topology evidence="1">Peripheral membrane protein</topology>
    </subcellularLocation>
</comment>
<comment type="similarity">
    <text evidence="1">Belongs to the ATPase gamma chain family.</text>
</comment>
<name>ATPG_STRPJ</name>
<accession>B8ZLB0</accession>
<organism>
    <name type="scientific">Streptococcus pneumoniae (strain ATCC 700669 / Spain 23F-1)</name>
    <dbReference type="NCBI Taxonomy" id="561276"/>
    <lineage>
        <taxon>Bacteria</taxon>
        <taxon>Bacillati</taxon>
        <taxon>Bacillota</taxon>
        <taxon>Bacilli</taxon>
        <taxon>Lactobacillales</taxon>
        <taxon>Streptococcaceae</taxon>
        <taxon>Streptococcus</taxon>
    </lineage>
</organism>
<keyword id="KW-0066">ATP synthesis</keyword>
<keyword id="KW-1003">Cell membrane</keyword>
<keyword id="KW-0139">CF(1)</keyword>
<keyword id="KW-0375">Hydrogen ion transport</keyword>
<keyword id="KW-0406">Ion transport</keyword>
<keyword id="KW-0472">Membrane</keyword>
<keyword id="KW-0813">Transport</keyword>
<dbReference type="EMBL" id="FM211187">
    <property type="protein sequence ID" value="CAR69255.1"/>
    <property type="molecule type" value="Genomic_DNA"/>
</dbReference>
<dbReference type="RefSeq" id="WP_000301210.1">
    <property type="nucleotide sequence ID" value="NC_011900.1"/>
</dbReference>
<dbReference type="SMR" id="B8ZLB0"/>
<dbReference type="KEGG" id="sne:SPN23F14730"/>
<dbReference type="HOGENOM" id="CLU_050669_0_1_9"/>
<dbReference type="GO" id="GO:0005886">
    <property type="term" value="C:plasma membrane"/>
    <property type="evidence" value="ECO:0007669"/>
    <property type="project" value="UniProtKB-SubCell"/>
</dbReference>
<dbReference type="GO" id="GO:0045259">
    <property type="term" value="C:proton-transporting ATP synthase complex"/>
    <property type="evidence" value="ECO:0007669"/>
    <property type="project" value="UniProtKB-KW"/>
</dbReference>
<dbReference type="GO" id="GO:0005524">
    <property type="term" value="F:ATP binding"/>
    <property type="evidence" value="ECO:0007669"/>
    <property type="project" value="UniProtKB-UniRule"/>
</dbReference>
<dbReference type="GO" id="GO:0046933">
    <property type="term" value="F:proton-transporting ATP synthase activity, rotational mechanism"/>
    <property type="evidence" value="ECO:0007669"/>
    <property type="project" value="UniProtKB-UniRule"/>
</dbReference>
<dbReference type="GO" id="GO:0042777">
    <property type="term" value="P:proton motive force-driven plasma membrane ATP synthesis"/>
    <property type="evidence" value="ECO:0007669"/>
    <property type="project" value="UniProtKB-UniRule"/>
</dbReference>
<dbReference type="CDD" id="cd12151">
    <property type="entry name" value="F1-ATPase_gamma"/>
    <property type="match status" value="1"/>
</dbReference>
<dbReference type="FunFam" id="3.40.1380.10:FF:000002">
    <property type="entry name" value="ATP synthase gamma chain"/>
    <property type="match status" value="1"/>
</dbReference>
<dbReference type="Gene3D" id="3.40.1380.10">
    <property type="match status" value="1"/>
</dbReference>
<dbReference type="Gene3D" id="1.10.287.80">
    <property type="entry name" value="ATP synthase, gamma subunit, helix hairpin domain"/>
    <property type="match status" value="1"/>
</dbReference>
<dbReference type="HAMAP" id="MF_00815">
    <property type="entry name" value="ATP_synth_gamma_bact"/>
    <property type="match status" value="1"/>
</dbReference>
<dbReference type="InterPro" id="IPR035968">
    <property type="entry name" value="ATP_synth_F1_ATPase_gsu"/>
</dbReference>
<dbReference type="InterPro" id="IPR000131">
    <property type="entry name" value="ATP_synth_F1_gsu"/>
</dbReference>
<dbReference type="InterPro" id="IPR023632">
    <property type="entry name" value="ATP_synth_F1_gsu_CS"/>
</dbReference>
<dbReference type="NCBIfam" id="TIGR01146">
    <property type="entry name" value="ATPsyn_F1gamma"/>
    <property type="match status" value="1"/>
</dbReference>
<dbReference type="NCBIfam" id="NF004147">
    <property type="entry name" value="PRK05621.2-1"/>
    <property type="match status" value="1"/>
</dbReference>
<dbReference type="PANTHER" id="PTHR11693">
    <property type="entry name" value="ATP SYNTHASE GAMMA CHAIN"/>
    <property type="match status" value="1"/>
</dbReference>
<dbReference type="PANTHER" id="PTHR11693:SF22">
    <property type="entry name" value="ATP SYNTHASE SUBUNIT GAMMA, MITOCHONDRIAL"/>
    <property type="match status" value="1"/>
</dbReference>
<dbReference type="Pfam" id="PF00231">
    <property type="entry name" value="ATP-synt"/>
    <property type="match status" value="1"/>
</dbReference>
<dbReference type="PRINTS" id="PR00126">
    <property type="entry name" value="ATPASEGAMMA"/>
</dbReference>
<dbReference type="SUPFAM" id="SSF52943">
    <property type="entry name" value="ATP synthase (F1-ATPase), gamma subunit"/>
    <property type="match status" value="1"/>
</dbReference>
<dbReference type="PROSITE" id="PS00153">
    <property type="entry name" value="ATPASE_GAMMA"/>
    <property type="match status" value="1"/>
</dbReference>
<sequence length="292" mass="32309">MAVSLNDIKTKIASTKNTSQITNAMQMVSAAKLGRSEEAARNFQVYAQKVRKLLTDILHGNGAGASTNPMLISRSVKKTGYIVITSDRGLVGGYNSSILKAVMELKEEYHPDGKGFEMICIGGMGADFFKARGIQPLYELRGLADQPSFDQVRKIISKTVEMYQNELFDELYVCYNHHVNTLTSQMRVEQMLPIVDLDPNEADEEYSLTFELETSREEILEQLLPQFAESMIYGAIIDAKTAENAAGMTAMQTATDNAKKVINDLTIQYNRARQAAITQEITEIVAGASALE</sequence>
<proteinExistence type="inferred from homology"/>
<reference key="1">
    <citation type="journal article" date="2009" name="J. Bacteriol.">
        <title>Role of conjugative elements in the evolution of the multidrug-resistant pandemic clone Streptococcus pneumoniae Spain23F ST81.</title>
        <authorList>
            <person name="Croucher N.J."/>
            <person name="Walker D."/>
            <person name="Romero P."/>
            <person name="Lennard N."/>
            <person name="Paterson G.K."/>
            <person name="Bason N.C."/>
            <person name="Mitchell A.M."/>
            <person name="Quail M.A."/>
            <person name="Andrew P.W."/>
            <person name="Parkhill J."/>
            <person name="Bentley S.D."/>
            <person name="Mitchell T.J."/>
        </authorList>
    </citation>
    <scope>NUCLEOTIDE SEQUENCE [LARGE SCALE GENOMIC DNA]</scope>
    <source>
        <strain>ATCC 700669 / Spain 23F-1</strain>
    </source>
</reference>
<feature type="chain" id="PRO_1000148640" description="ATP synthase gamma chain">
    <location>
        <begin position="1"/>
        <end position="292"/>
    </location>
</feature>
<gene>
    <name evidence="1" type="primary">atpG</name>
    <name type="ordered locus">SPN23F14730</name>
</gene>